<accession>Q6GLE8</accession>
<keyword id="KW-0433">Leucine-rich repeat</keyword>
<keyword id="KW-1185">Reference proteome</keyword>
<keyword id="KW-0677">Repeat</keyword>
<protein>
    <recommendedName>
        <fullName>Leucine-rich repeat-containing protein 28</fullName>
    </recommendedName>
</protein>
<sequence>MAFELCHTISVARLEKHKNLFLNYRNLNHFPLELLKDEGLQYLERLYMKRNSLTTLPENLAQKLPNLVELYLHSNNIVFVPEAIGSLVKLQSLDLSNNALEILCPDIGRLKSLRHLRLTNNRLKFLPPEIGKLKELQTLDLSTNHLVSLPEKLYQCQSLQYLTVDRNLLCSIPRQLCQLASLNELSMAGNRLASLPLDLGRSRELQYVYVDNNVQLKGLPSYLYNKVIGCSGCGSPVPLTENKLLSFTSGQLSIHVPAEVKSIGSATDFVLPLQELALRSLHAIFCSFLQDLSCTTPISLPKSLLELLQCPLGHCHRCSQSMFTIVYPKLFPLRETPMAGLHQGRTAVSFVAYCCSTQCLQTFDLLS</sequence>
<dbReference type="EMBL" id="CR760089">
    <property type="protein sequence ID" value="CAJ82663.1"/>
    <property type="molecule type" value="mRNA"/>
</dbReference>
<dbReference type="EMBL" id="BC074548">
    <property type="protein sequence ID" value="AAH74548.1"/>
    <property type="molecule type" value="mRNA"/>
</dbReference>
<dbReference type="RefSeq" id="NP_001005442.1">
    <property type="nucleotide sequence ID" value="NM_001005442.1"/>
</dbReference>
<dbReference type="RefSeq" id="XP_012814248.1">
    <property type="nucleotide sequence ID" value="XM_012958794.3"/>
</dbReference>
<dbReference type="RefSeq" id="XP_012814249.1">
    <property type="nucleotide sequence ID" value="XM_012958795.3"/>
</dbReference>
<dbReference type="RefSeq" id="XP_012814250.1">
    <property type="nucleotide sequence ID" value="XM_012958796.3"/>
</dbReference>
<dbReference type="RefSeq" id="XP_012814251.1">
    <property type="nucleotide sequence ID" value="XM_012958797.3"/>
</dbReference>
<dbReference type="SMR" id="Q6GLE8"/>
<dbReference type="FunCoup" id="Q6GLE8">
    <property type="interactions" value="474"/>
</dbReference>
<dbReference type="STRING" id="8364.ENSXETP00000002257"/>
<dbReference type="PaxDb" id="8364-ENSXETP00000040773"/>
<dbReference type="DNASU" id="448029"/>
<dbReference type="GeneID" id="448029"/>
<dbReference type="KEGG" id="xtr:448029"/>
<dbReference type="AGR" id="Xenbase:XB-GENE-957286"/>
<dbReference type="CTD" id="123355"/>
<dbReference type="Xenbase" id="XB-GENE-957286">
    <property type="gene designation" value="lrrc28"/>
</dbReference>
<dbReference type="eggNOG" id="KOG0619">
    <property type="taxonomic scope" value="Eukaryota"/>
</dbReference>
<dbReference type="HOGENOM" id="CLU_064321_1_0_1"/>
<dbReference type="InParanoid" id="Q6GLE8"/>
<dbReference type="OMA" id="LYHTCHR"/>
<dbReference type="OrthoDB" id="2021138at2759"/>
<dbReference type="PhylomeDB" id="Q6GLE8"/>
<dbReference type="TreeFam" id="TF332379"/>
<dbReference type="Proteomes" id="UP000008143">
    <property type="component" value="Chromosome 3"/>
</dbReference>
<dbReference type="Bgee" id="ENSXETG00000018804">
    <property type="expression patterns" value="Expressed in skeletal muscle tissue and 12 other cell types or tissues"/>
</dbReference>
<dbReference type="FunFam" id="3.80.10.10:FF:000041">
    <property type="entry name" value="LRR receptor-like serine/threonine-protein kinase ERECTA"/>
    <property type="match status" value="1"/>
</dbReference>
<dbReference type="Gene3D" id="3.80.10.10">
    <property type="entry name" value="Ribonuclease Inhibitor"/>
    <property type="match status" value="1"/>
</dbReference>
<dbReference type="InterPro" id="IPR001611">
    <property type="entry name" value="Leu-rich_rpt"/>
</dbReference>
<dbReference type="InterPro" id="IPR003591">
    <property type="entry name" value="Leu-rich_rpt_typical-subtyp"/>
</dbReference>
<dbReference type="InterPro" id="IPR050715">
    <property type="entry name" value="LRR-SigEffector_domain"/>
</dbReference>
<dbReference type="InterPro" id="IPR032675">
    <property type="entry name" value="LRR_dom_sf"/>
</dbReference>
<dbReference type="InterPro" id="IPR055414">
    <property type="entry name" value="LRR_R13L4/SHOC2-like"/>
</dbReference>
<dbReference type="PANTHER" id="PTHR45752:SF196">
    <property type="entry name" value="GH17740P"/>
    <property type="match status" value="1"/>
</dbReference>
<dbReference type="PANTHER" id="PTHR45752">
    <property type="entry name" value="LEUCINE-RICH REPEAT-CONTAINING"/>
    <property type="match status" value="1"/>
</dbReference>
<dbReference type="Pfam" id="PF23598">
    <property type="entry name" value="LRR_14"/>
    <property type="match status" value="1"/>
</dbReference>
<dbReference type="Pfam" id="PF13855">
    <property type="entry name" value="LRR_8"/>
    <property type="match status" value="1"/>
</dbReference>
<dbReference type="PRINTS" id="PR00019">
    <property type="entry name" value="LEURICHRPT"/>
</dbReference>
<dbReference type="SMART" id="SM00364">
    <property type="entry name" value="LRR_BAC"/>
    <property type="match status" value="5"/>
</dbReference>
<dbReference type="SMART" id="SM00369">
    <property type="entry name" value="LRR_TYP"/>
    <property type="match status" value="6"/>
</dbReference>
<dbReference type="SUPFAM" id="SSF52058">
    <property type="entry name" value="L domain-like"/>
    <property type="match status" value="1"/>
</dbReference>
<dbReference type="PROSITE" id="PS51450">
    <property type="entry name" value="LRR"/>
    <property type="match status" value="7"/>
</dbReference>
<reference key="1">
    <citation type="submission" date="2006-10" db="EMBL/GenBank/DDBJ databases">
        <authorList>
            <consortium name="Sanger Xenopus tropicalis EST/cDNA project"/>
        </authorList>
    </citation>
    <scope>NUCLEOTIDE SEQUENCE [LARGE SCALE MRNA]</scope>
    <source>
        <tissue>Neurula</tissue>
    </source>
</reference>
<reference key="2">
    <citation type="submission" date="2004-06" db="EMBL/GenBank/DDBJ databases">
        <authorList>
            <consortium name="NIH - Xenopus Gene Collection (XGC) project"/>
        </authorList>
    </citation>
    <scope>NUCLEOTIDE SEQUENCE [LARGE SCALE MRNA]</scope>
    <source>
        <tissue>Embryo</tissue>
    </source>
</reference>
<organism>
    <name type="scientific">Xenopus tropicalis</name>
    <name type="common">Western clawed frog</name>
    <name type="synonym">Silurana tropicalis</name>
    <dbReference type="NCBI Taxonomy" id="8364"/>
    <lineage>
        <taxon>Eukaryota</taxon>
        <taxon>Metazoa</taxon>
        <taxon>Chordata</taxon>
        <taxon>Craniata</taxon>
        <taxon>Vertebrata</taxon>
        <taxon>Euteleostomi</taxon>
        <taxon>Amphibia</taxon>
        <taxon>Batrachia</taxon>
        <taxon>Anura</taxon>
        <taxon>Pipoidea</taxon>
        <taxon>Pipidae</taxon>
        <taxon>Xenopodinae</taxon>
        <taxon>Xenopus</taxon>
        <taxon>Silurana</taxon>
    </lineage>
</organism>
<gene>
    <name type="primary">lrrc28</name>
    <name type="ORF">TNeu055l03.1</name>
</gene>
<feature type="chain" id="PRO_0000272300" description="Leucine-rich repeat-containing protein 28">
    <location>
        <begin position="1"/>
        <end position="367"/>
    </location>
</feature>
<feature type="repeat" description="LRR 1">
    <location>
        <begin position="16"/>
        <end position="36"/>
    </location>
</feature>
<feature type="repeat" description="LRR 2">
    <location>
        <begin position="42"/>
        <end position="63"/>
    </location>
</feature>
<feature type="repeat" description="LRR 3">
    <location>
        <begin position="66"/>
        <end position="87"/>
    </location>
</feature>
<feature type="repeat" description="LRR 4">
    <location>
        <begin position="89"/>
        <end position="111"/>
    </location>
</feature>
<feature type="repeat" description="LRR 5">
    <location>
        <begin position="112"/>
        <end position="133"/>
    </location>
</feature>
<feature type="repeat" description="LRR 6">
    <location>
        <begin position="135"/>
        <end position="156"/>
    </location>
</feature>
<feature type="repeat" description="LRR 7">
    <location>
        <begin position="158"/>
        <end position="179"/>
    </location>
</feature>
<feature type="repeat" description="LRR 8">
    <location>
        <begin position="181"/>
        <end position="202"/>
    </location>
</feature>
<feature type="repeat" description="LRR 9">
    <location>
        <begin position="204"/>
        <end position="226"/>
    </location>
</feature>
<name>LRC28_XENTR</name>
<proteinExistence type="evidence at transcript level"/>